<evidence type="ECO:0000255" key="1">
    <source>
        <dbReference type="PROSITE-ProRule" id="PRU00774"/>
    </source>
</evidence>
<evidence type="ECO:0000256" key="2">
    <source>
        <dbReference type="SAM" id="MobiDB-lite"/>
    </source>
</evidence>
<evidence type="ECO:0000305" key="3"/>
<proteinExistence type="inferred from homology"/>
<name>FH21B_ARATH</name>
<protein>
    <recommendedName>
        <fullName>Formin-like protein 21b</fullName>
        <shortName>AtFH21b</shortName>
    </recommendedName>
</protein>
<dbReference type="EMBL" id="AB010070">
    <property type="protein sequence ID" value="BAB11455.1"/>
    <property type="status" value="ALT_SEQ"/>
    <property type="molecule type" value="Genomic_DNA"/>
</dbReference>
<dbReference type="EMBL" id="CP002688">
    <property type="protein sequence ID" value="AED91200.1"/>
    <property type="status" value="ALT_SEQ"/>
    <property type="molecule type" value="Genomic_DNA"/>
</dbReference>
<dbReference type="RefSeq" id="NP_196393.2">
    <property type="nucleotide sequence ID" value="NM_120858.3"/>
</dbReference>
<dbReference type="SMR" id="P0C5K5"/>
<dbReference type="STRING" id="3702.P0C5K5"/>
<dbReference type="PaxDb" id="3702-AT5G07760.1"/>
<dbReference type="PeptideAtlas" id="P0C5K5"/>
<dbReference type="GeneID" id="830669"/>
<dbReference type="KEGG" id="ath:AT5G07760"/>
<dbReference type="Araport" id="AT5G07765"/>
<dbReference type="TAIR" id="AT5G07765"/>
<dbReference type="HOGENOM" id="CLU_366986_0_0_1"/>
<dbReference type="InParanoid" id="P0C5K5"/>
<dbReference type="PRO" id="PR:P0C5K5"/>
<dbReference type="Proteomes" id="UP000006548">
    <property type="component" value="Chromosome 5"/>
</dbReference>
<dbReference type="ExpressionAtlas" id="P0C5K5">
    <property type="expression patterns" value="baseline and differential"/>
</dbReference>
<dbReference type="Gene3D" id="1.20.58.2220">
    <property type="entry name" value="Formin, FH2 domain"/>
    <property type="match status" value="1"/>
</dbReference>
<dbReference type="InterPro" id="IPR015425">
    <property type="entry name" value="FH2_Formin"/>
</dbReference>
<dbReference type="InterPro" id="IPR042201">
    <property type="entry name" value="FH2_Formin_sf"/>
</dbReference>
<dbReference type="InterPro" id="IPR051144">
    <property type="entry name" value="Formin_homology_domain"/>
</dbReference>
<dbReference type="PANTHER" id="PTHR45733">
    <property type="entry name" value="FORMIN-J"/>
    <property type="match status" value="1"/>
</dbReference>
<dbReference type="PANTHER" id="PTHR45733:SF10">
    <property type="entry name" value="FORMIN-LIKE PROTEIN 15A-RELATED"/>
    <property type="match status" value="1"/>
</dbReference>
<dbReference type="Pfam" id="PF02181">
    <property type="entry name" value="FH2"/>
    <property type="match status" value="1"/>
</dbReference>
<dbReference type="SMART" id="SM00498">
    <property type="entry name" value="FH2"/>
    <property type="match status" value="1"/>
</dbReference>
<dbReference type="SUPFAM" id="SSF101447">
    <property type="entry name" value="Formin homology 2 domain (FH2 domain)"/>
    <property type="match status" value="1"/>
</dbReference>
<dbReference type="PROSITE" id="PS51444">
    <property type="entry name" value="FH2"/>
    <property type="match status" value="1"/>
</dbReference>
<reference key="1">
    <citation type="journal article" date="1998" name="DNA Res.">
        <title>Structural analysis of Arabidopsis thaliana chromosome 5. IV. Sequence features of the regions of 1,456,315 bp covered by nineteen physically assigned P1 and TAC clones.</title>
        <authorList>
            <person name="Sato S."/>
            <person name="Kaneko T."/>
            <person name="Kotani H."/>
            <person name="Nakamura Y."/>
            <person name="Asamizu E."/>
            <person name="Miyajima N."/>
            <person name="Tabata S."/>
        </authorList>
    </citation>
    <scope>NUCLEOTIDE SEQUENCE [LARGE SCALE GENOMIC DNA]</scope>
    <source>
        <strain>cv. Columbia</strain>
    </source>
</reference>
<reference key="2">
    <citation type="journal article" date="2017" name="Plant J.">
        <title>Araport11: a complete reannotation of the Arabidopsis thaliana reference genome.</title>
        <authorList>
            <person name="Cheng C.Y."/>
            <person name="Krishnakumar V."/>
            <person name="Chan A.P."/>
            <person name="Thibaud-Nissen F."/>
            <person name="Schobel S."/>
            <person name="Town C.D."/>
        </authorList>
    </citation>
    <scope>GENOME REANNOTATION</scope>
    <source>
        <strain>cv. Columbia</strain>
    </source>
</reference>
<reference key="3">
    <citation type="journal article" date="2002" name="Trends Plant Sci.">
        <title>Formins: intermediates in signal-transduction cascades that affect cytoskeletal reorganization.</title>
        <authorList>
            <person name="Deeks M.J."/>
            <person name="Hussey P.J."/>
            <person name="Davies B."/>
        </authorList>
    </citation>
    <scope>GENE FAMILY ORGANIZATION</scope>
    <scope>NOMENCLATURE</scope>
</reference>
<reference key="4">
    <citation type="journal article" date="2004" name="BMC Genomics">
        <title>Formin homology 2 domains occur in multiple contexts in angiosperms.</title>
        <authorList>
            <person name="Cvrckova F."/>
            <person name="Novotny M."/>
            <person name="Pickova D."/>
            <person name="Zarsky V."/>
        </authorList>
    </citation>
    <scope>GENE FAMILY ORGANIZATION</scope>
    <scope>NOMENCLATURE</scope>
</reference>
<comment type="similarity">
    <text evidence="3">Belongs to the formin-like family. Class-II subfamily.</text>
</comment>
<comment type="sequence caution" evidence="3">
    <conflict type="erroneous gene model prediction">
        <sequence resource="EMBL-CDS" id="AED91200"/>
    </conflict>
    <text>The predicted gene At5g07760 has been split into 2 genes: At5g07760 and At5g07765.</text>
</comment>
<comment type="sequence caution" evidence="3">
    <conflict type="erroneous gene model prediction">
        <sequence resource="EMBL-CDS" id="BAB11455"/>
    </conflict>
    <text>The predicted gene At5g07760 has been split into 2 genes: At5g07760 and At5g07765.</text>
</comment>
<sequence length="403" mass="45233">MELLFTATLLHFIRLFEKAHEENVKKADLEKKKAANETEMKHVVHNSWLNNLNIRASTLIDQRRAFNTMIMLQKVEMPLPDMMAAVLGMDESVLDVDQIENLIRFCPTKEEMKLLKNYTGDKATLGKCEQYFLELMKVPGVESKLRVFSFKIHFGTQIKELNKGLNTVNSACEEIRTSQKLKEIMKIILCLGNILNQGTARGSAVGFKLDSLLNLSEKCSANTNMTLMHYLCKVLASKASDLLDFHKDLENLESASKIHLKSLAEEMVAITKGLQKLNQELTASESDGPISEVFRKLLKDFISVAETQVATVSSLYSSVGGNTDALVHYFGEDPNDYPFEQVTATLLSFVRLFTTAAHQENVKQAELEKKKAAKEAEMEKTKKRVSLTNKKASGVGEEESCLI</sequence>
<keyword id="KW-1185">Reference proteome</keyword>
<organism>
    <name type="scientific">Arabidopsis thaliana</name>
    <name type="common">Mouse-ear cress</name>
    <dbReference type="NCBI Taxonomy" id="3702"/>
    <lineage>
        <taxon>Eukaryota</taxon>
        <taxon>Viridiplantae</taxon>
        <taxon>Streptophyta</taxon>
        <taxon>Embryophyta</taxon>
        <taxon>Tracheophyta</taxon>
        <taxon>Spermatophyta</taxon>
        <taxon>Magnoliopsida</taxon>
        <taxon>eudicotyledons</taxon>
        <taxon>Gunneridae</taxon>
        <taxon>Pentapetalae</taxon>
        <taxon>rosids</taxon>
        <taxon>malvids</taxon>
        <taxon>Brassicales</taxon>
        <taxon>Brassicaceae</taxon>
        <taxon>Camelineae</taxon>
        <taxon>Arabidopsis</taxon>
    </lineage>
</organism>
<gene>
    <name type="primary">FH21B</name>
    <name type="ordered locus">At5g07765</name>
    <name type="ORF">MBK20.22</name>
</gene>
<feature type="chain" id="PRO_0000308548" description="Formin-like protein 21b">
    <location>
        <begin position="1"/>
        <end position="403"/>
    </location>
</feature>
<feature type="domain" description="FH2" evidence="1">
    <location>
        <begin position="1"/>
        <end position="380"/>
    </location>
</feature>
<feature type="region of interest" description="Disordered" evidence="2">
    <location>
        <begin position="373"/>
        <end position="403"/>
    </location>
</feature>
<accession>P0C5K5</accession>
<accession>F4K849</accession>
<accession>Q9FLQ6</accession>